<reference key="1">
    <citation type="journal article" date="2009" name="Nature">
        <title>Evolution of pathogenicity and sexual reproduction in eight Candida genomes.</title>
        <authorList>
            <person name="Butler G."/>
            <person name="Rasmussen M.D."/>
            <person name="Lin M.F."/>
            <person name="Santos M.A.S."/>
            <person name="Sakthikumar S."/>
            <person name="Munro C.A."/>
            <person name="Rheinbay E."/>
            <person name="Grabherr M."/>
            <person name="Forche A."/>
            <person name="Reedy J.L."/>
            <person name="Agrafioti I."/>
            <person name="Arnaud M.B."/>
            <person name="Bates S."/>
            <person name="Brown A.J.P."/>
            <person name="Brunke S."/>
            <person name="Costanzo M.C."/>
            <person name="Fitzpatrick D.A."/>
            <person name="de Groot P.W.J."/>
            <person name="Harris D."/>
            <person name="Hoyer L.L."/>
            <person name="Hube B."/>
            <person name="Klis F.M."/>
            <person name="Kodira C."/>
            <person name="Lennard N."/>
            <person name="Logue M.E."/>
            <person name="Martin R."/>
            <person name="Neiman A.M."/>
            <person name="Nikolaou E."/>
            <person name="Quail M.A."/>
            <person name="Quinn J."/>
            <person name="Santos M.C."/>
            <person name="Schmitzberger F.F."/>
            <person name="Sherlock G."/>
            <person name="Shah P."/>
            <person name="Silverstein K.A.T."/>
            <person name="Skrzypek M.S."/>
            <person name="Soll D."/>
            <person name="Staggs R."/>
            <person name="Stansfield I."/>
            <person name="Stumpf M.P.H."/>
            <person name="Sudbery P.E."/>
            <person name="Srikantha T."/>
            <person name="Zeng Q."/>
            <person name="Berman J."/>
            <person name="Berriman M."/>
            <person name="Heitman J."/>
            <person name="Gow N.A.R."/>
            <person name="Lorenz M.C."/>
            <person name="Birren B.W."/>
            <person name="Kellis M."/>
            <person name="Cuomo C.A."/>
        </authorList>
    </citation>
    <scope>NUCLEOTIDE SEQUENCE [LARGE SCALE GENOMIC DNA]</scope>
    <source>
        <strain>ATCC 11503 / BCRC 21390 / CBS 2605 / JCM 1781 / NBRC 1676 / NRRL YB-4239</strain>
    </source>
</reference>
<protein>
    <recommendedName>
        <fullName>Tethering factor for nuclear proteasome STS1</fullName>
    </recommendedName>
</protein>
<feature type="chain" id="PRO_0000409414" description="Tethering factor for nuclear proteasome STS1">
    <location>
        <begin position="1"/>
        <end position="437"/>
    </location>
</feature>
<feature type="region of interest" description="Disordered" evidence="2">
    <location>
        <begin position="1"/>
        <end position="110"/>
    </location>
</feature>
<feature type="region of interest" description="Disordered" evidence="2">
    <location>
        <begin position="385"/>
        <end position="416"/>
    </location>
</feature>
<feature type="compositionally biased region" description="Low complexity" evidence="2">
    <location>
        <begin position="34"/>
        <end position="54"/>
    </location>
</feature>
<feature type="compositionally biased region" description="Basic and acidic residues" evidence="2">
    <location>
        <begin position="82"/>
        <end position="97"/>
    </location>
</feature>
<feature type="compositionally biased region" description="Gly residues" evidence="2">
    <location>
        <begin position="392"/>
        <end position="412"/>
    </location>
</feature>
<comment type="function">
    <text evidence="1">Involved in ubiquitin-mediated protein degradation. Regulatory factor in the ubiquitin/proteasome pathway that controls the turnover of proteasome substrates. Targets proteasomes to the nucleus and facilitates the degradation of nuclear proteins (By similarity).</text>
</comment>
<comment type="subunit">
    <text evidence="1">Binds the proteasome.</text>
</comment>
<comment type="subcellular location">
    <subcellularLocation>
        <location evidence="1">Cytoplasm</location>
    </subcellularLocation>
    <subcellularLocation>
        <location evidence="1">Nucleus</location>
    </subcellularLocation>
</comment>
<comment type="similarity">
    <text evidence="3">Belongs to the cut8/STS1 family.</text>
</comment>
<proteinExistence type="inferred from homology"/>
<keyword id="KW-0963">Cytoplasm</keyword>
<keyword id="KW-0539">Nucleus</keyword>
<keyword id="KW-0653">Protein transport</keyword>
<keyword id="KW-1185">Reference proteome</keyword>
<keyword id="KW-0813">Transport</keyword>
<gene>
    <name type="primary">STS1</name>
    <name type="ORF">LELG_00415</name>
</gene>
<sequence>MMSASFHWKHRSNEQGKNPLDKSAMPSSTLHYMSTNNSTNNGTGTSTNTSGSSSHYTIAPRSFSEMVPSQQQQQQNKKRKRYSDDDSETHNETHSENNNDTSQEQFKPHNHRDQTASGLLHLQQQQLQQQHSLLLLQQLHYFHGSSKTKRTKIPKIIGQPLPTSRLIESLDKTHLEKLLHSLIDIHPELNKTIQKITPKPSLENLLLILQDKHAQLIDHLPYKCSETSDYSYLRIKPYLQEFLSCLEDYVLYYLPSNNYSETKHKLIQSLKFIDEATSTIHKLPNFTNSEYQYMRNLTYEQLINCWLILVNQETNCDTGNGLDYTEFHKIVEELDLLESLKQHGVQSGQEGFSKVIEAVQNKLGQNQILLSRQFGIDYGNDMTVSSSNGNRSGTGAGFGGGGGGASRSGSGSGTSSNALSDMITVDYSLYSLSNRSV</sequence>
<name>STS1_LODEL</name>
<evidence type="ECO:0000250" key="1"/>
<evidence type="ECO:0000256" key="2">
    <source>
        <dbReference type="SAM" id="MobiDB-lite"/>
    </source>
</evidence>
<evidence type="ECO:0000305" key="3"/>
<organism>
    <name type="scientific">Lodderomyces elongisporus (strain ATCC 11503 / CBS 2605 / JCM 1781 / NBRC 1676 / NRRL YB-4239)</name>
    <name type="common">Yeast</name>
    <name type="synonym">Saccharomyces elongisporus</name>
    <dbReference type="NCBI Taxonomy" id="379508"/>
    <lineage>
        <taxon>Eukaryota</taxon>
        <taxon>Fungi</taxon>
        <taxon>Dikarya</taxon>
        <taxon>Ascomycota</taxon>
        <taxon>Saccharomycotina</taxon>
        <taxon>Pichiomycetes</taxon>
        <taxon>Debaryomycetaceae</taxon>
        <taxon>Candida/Lodderomyces clade</taxon>
        <taxon>Lodderomyces</taxon>
    </lineage>
</organism>
<accession>A5DSS9</accession>
<dbReference type="EMBL" id="CH981524">
    <property type="protein sequence ID" value="EDK42237.1"/>
    <property type="molecule type" value="Genomic_DNA"/>
</dbReference>
<dbReference type="RefSeq" id="XP_001527895.1">
    <property type="nucleotide sequence ID" value="XM_001527845.1"/>
</dbReference>
<dbReference type="SMR" id="A5DSS9"/>
<dbReference type="STRING" id="379508.A5DSS9"/>
<dbReference type="GeneID" id="5234941"/>
<dbReference type="KEGG" id="lel:PVL30_000406"/>
<dbReference type="VEuPathDB" id="FungiDB:LELG_00415"/>
<dbReference type="eggNOG" id="ENOG502RNK4">
    <property type="taxonomic scope" value="Eukaryota"/>
</dbReference>
<dbReference type="HOGENOM" id="CLU_627095_0_0_1"/>
<dbReference type="InParanoid" id="A5DSS9"/>
<dbReference type="OMA" id="NISLWED"/>
<dbReference type="OrthoDB" id="10061064at2759"/>
<dbReference type="Proteomes" id="UP000001996">
    <property type="component" value="Unassembled WGS sequence"/>
</dbReference>
<dbReference type="GO" id="GO:0005737">
    <property type="term" value="C:cytoplasm"/>
    <property type="evidence" value="ECO:0007669"/>
    <property type="project" value="UniProtKB-SubCell"/>
</dbReference>
<dbReference type="GO" id="GO:0031965">
    <property type="term" value="C:nuclear membrane"/>
    <property type="evidence" value="ECO:0007669"/>
    <property type="project" value="TreeGrafter"/>
</dbReference>
<dbReference type="GO" id="GO:0070628">
    <property type="term" value="F:proteasome binding"/>
    <property type="evidence" value="ECO:0007669"/>
    <property type="project" value="TreeGrafter"/>
</dbReference>
<dbReference type="GO" id="GO:0071630">
    <property type="term" value="P:nuclear protein quality control by the ubiquitin-proteasome system"/>
    <property type="evidence" value="ECO:0007669"/>
    <property type="project" value="InterPro"/>
</dbReference>
<dbReference type="GO" id="GO:0031144">
    <property type="term" value="P:proteasome localization"/>
    <property type="evidence" value="ECO:0007669"/>
    <property type="project" value="InterPro"/>
</dbReference>
<dbReference type="GO" id="GO:0015031">
    <property type="term" value="P:protein transport"/>
    <property type="evidence" value="ECO:0007669"/>
    <property type="project" value="UniProtKB-KW"/>
</dbReference>
<dbReference type="Gene3D" id="1.20.58.1590">
    <property type="entry name" value="Tethering factor for nuclear proteasome Cut8/Sts1"/>
    <property type="match status" value="1"/>
</dbReference>
<dbReference type="InterPro" id="IPR013868">
    <property type="entry name" value="Cut8/Sts1_fam"/>
</dbReference>
<dbReference type="InterPro" id="IPR038422">
    <property type="entry name" value="Cut8/Sts1_sf"/>
</dbReference>
<dbReference type="PANTHER" id="PTHR28032">
    <property type="entry name" value="FI02826P"/>
    <property type="match status" value="1"/>
</dbReference>
<dbReference type="PANTHER" id="PTHR28032:SF1">
    <property type="entry name" value="FI02826P"/>
    <property type="match status" value="1"/>
</dbReference>
<dbReference type="Pfam" id="PF08559">
    <property type="entry name" value="Cut8"/>
    <property type="match status" value="1"/>
</dbReference>